<evidence type="ECO:0000250" key="1">
    <source>
        <dbReference type="UniProtKB" id="L0E2Z4"/>
    </source>
</evidence>
<evidence type="ECO:0000250" key="2">
    <source>
        <dbReference type="UniProtKB" id="O93868"/>
    </source>
</evidence>
<evidence type="ECO:0000250" key="3">
    <source>
        <dbReference type="UniProtKB" id="P38286"/>
    </source>
</evidence>
<evidence type="ECO:0000255" key="4">
    <source>
        <dbReference type="HAMAP-Rule" id="MF_03107"/>
    </source>
</evidence>
<proteinExistence type="inferred from homology"/>
<reference key="1">
    <citation type="journal article" date="2007" name="Nat. Biotechnol.">
        <title>Genome sequencing and analysis of the versatile cell factory Aspergillus niger CBS 513.88.</title>
        <authorList>
            <person name="Pel H.J."/>
            <person name="de Winde J.H."/>
            <person name="Archer D.B."/>
            <person name="Dyer P.S."/>
            <person name="Hofmann G."/>
            <person name="Schaap P.J."/>
            <person name="Turner G."/>
            <person name="de Vries R.P."/>
            <person name="Albang R."/>
            <person name="Albermann K."/>
            <person name="Andersen M.R."/>
            <person name="Bendtsen J.D."/>
            <person name="Benen J.A.E."/>
            <person name="van den Berg M."/>
            <person name="Breestraat S."/>
            <person name="Caddick M.X."/>
            <person name="Contreras R."/>
            <person name="Cornell M."/>
            <person name="Coutinho P.M."/>
            <person name="Danchin E.G.J."/>
            <person name="Debets A.J.M."/>
            <person name="Dekker P."/>
            <person name="van Dijck P.W.M."/>
            <person name="van Dijk A."/>
            <person name="Dijkhuizen L."/>
            <person name="Driessen A.J.M."/>
            <person name="d'Enfert C."/>
            <person name="Geysens S."/>
            <person name="Goosen C."/>
            <person name="Groot G.S.P."/>
            <person name="de Groot P.W.J."/>
            <person name="Guillemette T."/>
            <person name="Henrissat B."/>
            <person name="Herweijer M."/>
            <person name="van den Hombergh J.P.T.W."/>
            <person name="van den Hondel C.A.M.J.J."/>
            <person name="van der Heijden R.T.J.M."/>
            <person name="van der Kaaij R.M."/>
            <person name="Klis F.M."/>
            <person name="Kools H.J."/>
            <person name="Kubicek C.P."/>
            <person name="van Kuyk P.A."/>
            <person name="Lauber J."/>
            <person name="Lu X."/>
            <person name="van der Maarel M.J.E.C."/>
            <person name="Meulenberg R."/>
            <person name="Menke H."/>
            <person name="Mortimer M.A."/>
            <person name="Nielsen J."/>
            <person name="Oliver S.G."/>
            <person name="Olsthoorn M."/>
            <person name="Pal K."/>
            <person name="van Peij N.N.M.E."/>
            <person name="Ram A.F.J."/>
            <person name="Rinas U."/>
            <person name="Roubos J.A."/>
            <person name="Sagt C.M.J."/>
            <person name="Schmoll M."/>
            <person name="Sun J."/>
            <person name="Ussery D."/>
            <person name="Varga J."/>
            <person name="Vervecken W."/>
            <person name="van de Vondervoort P.J.J."/>
            <person name="Wedler H."/>
            <person name="Woesten H.A.B."/>
            <person name="Zeng A.-P."/>
            <person name="van Ooyen A.J.J."/>
            <person name="Visser J."/>
            <person name="Stam H."/>
        </authorList>
    </citation>
    <scope>NUCLEOTIDE SEQUENCE [LARGE SCALE GENOMIC DNA]</scope>
    <source>
        <strain>ATCC MYA-4892 / CBS 513.88 / FGSC A1513</strain>
    </source>
</reference>
<sequence>MDFLTKHLDCLSNWQLNLQPGWQTVGASALLAAGSLFVVSRALVFVRVLLSLFVLPGKPLRSFGPKGSWAVVTGASDGLGKEFALQLARADFNILLVSRTASKLDTLSNEITTKFPSVQTKTLAMDFARNQDSDYEKLKELVDELDVSVLVNNVGKSHSIPTPFALTPEDEMTDIVTINCLGTLRATQLVVPGMMQRKRGLVLTMGSFGGLLPTPLLATYSGSKAFLQQWSTSLGSELEPYGITVELVQAYLITSAMSKIRRTSATIPDPRSFVKSVLTKIGRNGGSPTYAYSSSPYWSHGLMAWFLTCVTGTMGKIVVSQNKGMHESIRKRALRKAEREKGKKST</sequence>
<dbReference type="EC" id="1.1.1.330" evidence="4"/>
<dbReference type="EMBL" id="AM270004">
    <property type="protein sequence ID" value="CAK47637.1"/>
    <property type="molecule type" value="Genomic_DNA"/>
</dbReference>
<dbReference type="RefSeq" id="XP_001399493.1">
    <property type="nucleotide sequence ID" value="XM_001399456.2"/>
</dbReference>
<dbReference type="SMR" id="A2QCH3"/>
<dbReference type="EnsemblFungi" id="CAK47637">
    <property type="protein sequence ID" value="CAK47637"/>
    <property type="gene ID" value="An02g03570"/>
</dbReference>
<dbReference type="GeneID" id="4978843"/>
<dbReference type="KEGG" id="ang:An02g03570"/>
<dbReference type="VEuPathDB" id="FungiDB:An02g03570"/>
<dbReference type="HOGENOM" id="CLU_010194_38_0_1"/>
<dbReference type="UniPathway" id="UPA00094"/>
<dbReference type="Proteomes" id="UP000006706">
    <property type="component" value="Chromosome 4R"/>
</dbReference>
<dbReference type="GO" id="GO:0005789">
    <property type="term" value="C:endoplasmic reticulum membrane"/>
    <property type="evidence" value="ECO:0007669"/>
    <property type="project" value="UniProtKB-SubCell"/>
</dbReference>
<dbReference type="GO" id="GO:0045703">
    <property type="term" value="F:ketoreductase activity"/>
    <property type="evidence" value="ECO:0007669"/>
    <property type="project" value="UniProtKB-UniRule"/>
</dbReference>
<dbReference type="GO" id="GO:0141040">
    <property type="term" value="F:very-long-chain 3-oxoacyl-CoA reductase activity"/>
    <property type="evidence" value="ECO:0007669"/>
    <property type="project" value="UniProtKB-EC"/>
</dbReference>
<dbReference type="GO" id="GO:0030497">
    <property type="term" value="P:fatty acid elongation"/>
    <property type="evidence" value="ECO:0007669"/>
    <property type="project" value="UniProtKB-UniRule"/>
</dbReference>
<dbReference type="GO" id="GO:0044550">
    <property type="term" value="P:secondary metabolite biosynthetic process"/>
    <property type="evidence" value="ECO:0007669"/>
    <property type="project" value="UniProtKB-ARBA"/>
</dbReference>
<dbReference type="GO" id="GO:0030148">
    <property type="term" value="P:sphingolipid biosynthetic process"/>
    <property type="evidence" value="ECO:0007669"/>
    <property type="project" value="EnsemblFungi"/>
</dbReference>
<dbReference type="GO" id="GO:0042761">
    <property type="term" value="P:very long-chain fatty acid biosynthetic process"/>
    <property type="evidence" value="ECO:0007669"/>
    <property type="project" value="EnsemblFungi"/>
</dbReference>
<dbReference type="CDD" id="cd05356">
    <property type="entry name" value="17beta-HSD1_like_SDR_c"/>
    <property type="match status" value="1"/>
</dbReference>
<dbReference type="FunFam" id="3.40.50.720:FF:000317">
    <property type="entry name" value="Very-long-chain 3-oxoacyl-CoA reductase"/>
    <property type="match status" value="1"/>
</dbReference>
<dbReference type="Gene3D" id="3.40.50.720">
    <property type="entry name" value="NAD(P)-binding Rossmann-like Domain"/>
    <property type="match status" value="1"/>
</dbReference>
<dbReference type="HAMAP" id="MF_03107">
    <property type="entry name" value="3_ketoreductase"/>
    <property type="match status" value="1"/>
</dbReference>
<dbReference type="InterPro" id="IPR027533">
    <property type="entry name" value="3_ketoreductase_fungal"/>
</dbReference>
<dbReference type="InterPro" id="IPR036291">
    <property type="entry name" value="NAD(P)-bd_dom_sf"/>
</dbReference>
<dbReference type="InterPro" id="IPR020904">
    <property type="entry name" value="Sc_DH/Rdtase_CS"/>
</dbReference>
<dbReference type="InterPro" id="IPR002347">
    <property type="entry name" value="SDR_fam"/>
</dbReference>
<dbReference type="PANTHER" id="PTHR43086:SF2">
    <property type="entry name" value="HYDROXYSTEROID DEHYDROGENASE-LIKE PROTEIN 1"/>
    <property type="match status" value="1"/>
</dbReference>
<dbReference type="PANTHER" id="PTHR43086">
    <property type="entry name" value="VERY-LONG-CHAIN 3-OXOOACYL-COA REDUCTASE"/>
    <property type="match status" value="1"/>
</dbReference>
<dbReference type="Pfam" id="PF00106">
    <property type="entry name" value="adh_short"/>
    <property type="match status" value="1"/>
</dbReference>
<dbReference type="PIRSF" id="PIRSF000126">
    <property type="entry name" value="11-beta-HSD1"/>
    <property type="match status" value="1"/>
</dbReference>
<dbReference type="PRINTS" id="PR00081">
    <property type="entry name" value="GDHRDH"/>
</dbReference>
<dbReference type="SUPFAM" id="SSF51735">
    <property type="entry name" value="NAD(P)-binding Rossmann-fold domains"/>
    <property type="match status" value="1"/>
</dbReference>
<dbReference type="PROSITE" id="PS00061">
    <property type="entry name" value="ADH_SHORT"/>
    <property type="match status" value="1"/>
</dbReference>
<comment type="function">
    <text evidence="4">Component of the microsomal membrane bound fatty acid elongation system, which produces the 26-carbon very long-chain fatty acids (VLCFA) from palmitate. Catalyzes the reduction of the 3-ketoacyl-CoA intermediate that is formed in each cycle of fatty acid elongation. VLCFAs serve as precursors for ceramide and sphingolipids.</text>
</comment>
<comment type="catalytic activity">
    <reaction evidence="4">
        <text>a very-long-chain (3R)-3-hydroxyacyl-CoA + NADP(+) = a very-long-chain 3-oxoacyl-CoA + NADPH + H(+)</text>
        <dbReference type="Rhea" id="RHEA:48680"/>
        <dbReference type="ChEBI" id="CHEBI:15378"/>
        <dbReference type="ChEBI" id="CHEBI:57783"/>
        <dbReference type="ChEBI" id="CHEBI:58349"/>
        <dbReference type="ChEBI" id="CHEBI:85440"/>
        <dbReference type="ChEBI" id="CHEBI:90725"/>
        <dbReference type="EC" id="1.1.1.330"/>
    </reaction>
</comment>
<comment type="pathway">
    <text evidence="3">Lipid metabolism; fatty acid biosynthesis.</text>
</comment>
<comment type="subcellular location">
    <subcellularLocation>
        <location evidence="4">Endoplasmic reticulum membrane</location>
        <topology evidence="4">Single-pass membrane protein</topology>
    </subcellularLocation>
</comment>
<comment type="similarity">
    <text evidence="4">Belongs to the short-chain dehydrogenases/reductases (SDR) family.</text>
</comment>
<gene>
    <name type="ORF">An02g03570</name>
</gene>
<accession>A2QCH3</accession>
<organism>
    <name type="scientific">Aspergillus niger (strain ATCC MYA-4892 / CBS 513.88 / FGSC A1513)</name>
    <dbReference type="NCBI Taxonomy" id="425011"/>
    <lineage>
        <taxon>Eukaryota</taxon>
        <taxon>Fungi</taxon>
        <taxon>Dikarya</taxon>
        <taxon>Ascomycota</taxon>
        <taxon>Pezizomycotina</taxon>
        <taxon>Eurotiomycetes</taxon>
        <taxon>Eurotiomycetidae</taxon>
        <taxon>Eurotiales</taxon>
        <taxon>Aspergillaceae</taxon>
        <taxon>Aspergillus</taxon>
        <taxon>Aspergillus subgen. Circumdati</taxon>
    </lineage>
</organism>
<name>MKAR_ASPNC</name>
<keyword id="KW-0256">Endoplasmic reticulum</keyword>
<keyword id="KW-0275">Fatty acid biosynthesis</keyword>
<keyword id="KW-0276">Fatty acid metabolism</keyword>
<keyword id="KW-0444">Lipid biosynthesis</keyword>
<keyword id="KW-0443">Lipid metabolism</keyword>
<keyword id="KW-0472">Membrane</keyword>
<keyword id="KW-0521">NADP</keyword>
<keyword id="KW-0560">Oxidoreductase</keyword>
<keyword id="KW-1185">Reference proteome</keyword>
<keyword id="KW-0812">Transmembrane</keyword>
<keyword id="KW-1133">Transmembrane helix</keyword>
<protein>
    <recommendedName>
        <fullName evidence="4">Very-long-chain 3-oxoacyl-CoA reductase</fullName>
        <ecNumber evidence="4">1.1.1.330</ecNumber>
    </recommendedName>
    <alternativeName>
        <fullName evidence="4">3-ketoacyl-CoA reductase</fullName>
        <shortName evidence="4">3-ketoreductase</shortName>
        <shortName evidence="4">KAR</shortName>
    </alternativeName>
    <alternativeName>
        <fullName evidence="4">Microsomal beta-keto-reductase</fullName>
    </alternativeName>
</protein>
<feature type="chain" id="PRO_0000357298" description="Very-long-chain 3-oxoacyl-CoA reductase">
    <location>
        <begin position="1"/>
        <end position="346"/>
    </location>
</feature>
<feature type="transmembrane region" description="Helical" evidence="4">
    <location>
        <begin position="26"/>
        <end position="46"/>
    </location>
</feature>
<feature type="active site" description="Proton donor" evidence="2">
    <location>
        <position position="220"/>
    </location>
</feature>
<feature type="active site" description="Lowers pKa of active site Tyr" evidence="2">
    <location>
        <position position="224"/>
    </location>
</feature>
<feature type="binding site" evidence="1">
    <location>
        <position position="71"/>
    </location>
    <ligand>
        <name>NADP(+)</name>
        <dbReference type="ChEBI" id="CHEBI:58349"/>
    </ligand>
</feature>
<feature type="binding site" evidence="1">
    <location>
        <position position="126"/>
    </location>
    <ligand>
        <name>NADP(+)</name>
        <dbReference type="ChEBI" id="CHEBI:58349"/>
    </ligand>
</feature>
<feature type="binding site" evidence="1">
    <location>
        <position position="134"/>
    </location>
    <ligand>
        <name>NADP(+)</name>
        <dbReference type="ChEBI" id="CHEBI:58349"/>
    </ligand>
</feature>
<feature type="binding site" evidence="2">
    <location>
        <position position="153"/>
    </location>
    <ligand>
        <name>NADP(+)</name>
        <dbReference type="ChEBI" id="CHEBI:58349"/>
    </ligand>
</feature>
<feature type="binding site" evidence="2">
    <location>
        <position position="220"/>
    </location>
    <ligand>
        <name>NADP(+)</name>
        <dbReference type="ChEBI" id="CHEBI:58349"/>
    </ligand>
</feature>
<feature type="binding site" evidence="2">
    <location>
        <position position="224"/>
    </location>
    <ligand>
        <name>NADP(+)</name>
        <dbReference type="ChEBI" id="CHEBI:58349"/>
    </ligand>
</feature>
<feature type="binding site" evidence="2">
    <location>
        <position position="253"/>
    </location>
    <ligand>
        <name>NADP(+)</name>
        <dbReference type="ChEBI" id="CHEBI:58349"/>
    </ligand>
</feature>
<feature type="binding site" evidence="1">
    <location>
        <position position="255"/>
    </location>
    <ligand>
        <name>NADP(+)</name>
        <dbReference type="ChEBI" id="CHEBI:58349"/>
    </ligand>
</feature>